<comment type="function">
    <text evidence="1 2">May play a role in the transport of fatty acids. Binds fatty acids and fatty acyl-CoAs including palmitic acid, oleic acid, cis-parinaric acid and palmitoyl-CoA (in vitro).</text>
</comment>
<comment type="subunit">
    <text evidence="1 2">Monomer.</text>
</comment>
<comment type="subcellular location">
    <subcellularLocation>
        <location evidence="3">Peroxisome</location>
    </subcellularLocation>
</comment>
<comment type="miscellaneous">
    <text>Expressed essentially in cells grown on palmitic acid with small amounts found in cells grown on glucose.</text>
</comment>
<organism>
    <name type="scientific">Yarrowia lipolytica (strain CLIB 122 / E 150)</name>
    <name type="common">Yeast</name>
    <name type="synonym">Candida lipolytica</name>
    <dbReference type="NCBI Taxonomy" id="284591"/>
    <lineage>
        <taxon>Eukaryota</taxon>
        <taxon>Fungi</taxon>
        <taxon>Dikarya</taxon>
        <taxon>Ascomycota</taxon>
        <taxon>Saccharomycotina</taxon>
        <taxon>Dipodascomycetes</taxon>
        <taxon>Dipodascales</taxon>
        <taxon>Dipodascales incertae sedis</taxon>
        <taxon>Yarrowia</taxon>
    </lineage>
</organism>
<evidence type="ECO:0000269" key="1">
    <source>
    </source>
</evidence>
<evidence type="ECO:0000269" key="2">
    <source>
    </source>
</evidence>
<evidence type="ECO:0000305" key="3"/>
<evidence type="ECO:0007829" key="4">
    <source>
        <dbReference type="PDB" id="6OVP"/>
    </source>
</evidence>
<keyword id="KW-0002">3D-structure</keyword>
<keyword id="KW-0007">Acetylation</keyword>
<keyword id="KW-0903">Direct protein sequencing</keyword>
<keyword id="KW-0446">Lipid-binding</keyword>
<keyword id="KW-0576">Peroxisome</keyword>
<keyword id="KW-1185">Reference proteome</keyword>
<keyword id="KW-0813">Transport</keyword>
<proteinExistence type="evidence at protein level"/>
<name>SCP2_YARLI</name>
<accession>P80547</accession>
<accession>Q6C7F2</accession>
<accession>Q8J0I7</accession>
<sequence>MSLKVDGFTSSIIFDVIRDGLNDPSQAKQKAESIKKANAIIVFNLKNKAGKTESWYLDLKNDGDVGKGNKSPKGDADIQLTLSDDHFQQLVEGKANAQRLFMTGKLKVKGNVMKAAAIEGILKNAQNNL</sequence>
<protein>
    <recommendedName>
        <fullName>Fatty acid-binding protein</fullName>
    </recommendedName>
    <alternativeName>
        <fullName>Sterol carrier protein 2</fullName>
    </alternativeName>
    <alternativeName>
        <fullName>YLSCP2</fullName>
    </alternativeName>
</protein>
<reference key="1">
    <citation type="journal article" date="2006" name="Arch. Biochem. Biophys.">
        <title>A yeast sterol carrier protein with fatty-acid and fatty-acyl-CoA binding activity.</title>
        <authorList>
            <person name="Ferreyra R.G."/>
            <person name="Burgardt N.I."/>
            <person name="Milikowski D."/>
            <person name="Melen G."/>
            <person name="Kornblihtt A.R."/>
            <person name="Dell' Angelica E.C."/>
            <person name="Santome J.A."/>
            <person name="Ermacora M.R."/>
        </authorList>
    </citation>
    <scope>NUCLEOTIDE SEQUENCE [MRNA]</scope>
    <scope>PROTEIN SEQUENCE OF N-TERMINUS</scope>
    <scope>CLEAVAGE OF INITIATOR METHIONINE</scope>
    <scope>FUNCTION</scope>
    <scope>SUBUNIT</scope>
    <scope>ACETYLATION AT SER-2</scope>
    <source>
        <strain>CX-121-1B</strain>
    </source>
</reference>
<reference key="2">
    <citation type="journal article" date="2004" name="Nature">
        <title>Genome evolution in yeasts.</title>
        <authorList>
            <person name="Dujon B."/>
            <person name="Sherman D."/>
            <person name="Fischer G."/>
            <person name="Durrens P."/>
            <person name="Casaregola S."/>
            <person name="Lafontaine I."/>
            <person name="de Montigny J."/>
            <person name="Marck C."/>
            <person name="Neuveglise C."/>
            <person name="Talla E."/>
            <person name="Goffard N."/>
            <person name="Frangeul L."/>
            <person name="Aigle M."/>
            <person name="Anthouard V."/>
            <person name="Babour A."/>
            <person name="Barbe V."/>
            <person name="Barnay S."/>
            <person name="Blanchin S."/>
            <person name="Beckerich J.-M."/>
            <person name="Beyne E."/>
            <person name="Bleykasten C."/>
            <person name="Boisrame A."/>
            <person name="Boyer J."/>
            <person name="Cattolico L."/>
            <person name="Confanioleri F."/>
            <person name="de Daruvar A."/>
            <person name="Despons L."/>
            <person name="Fabre E."/>
            <person name="Fairhead C."/>
            <person name="Ferry-Dumazet H."/>
            <person name="Groppi A."/>
            <person name="Hantraye F."/>
            <person name="Hennequin C."/>
            <person name="Jauniaux N."/>
            <person name="Joyet P."/>
            <person name="Kachouri R."/>
            <person name="Kerrest A."/>
            <person name="Koszul R."/>
            <person name="Lemaire M."/>
            <person name="Lesur I."/>
            <person name="Ma L."/>
            <person name="Muller H."/>
            <person name="Nicaud J.-M."/>
            <person name="Nikolski M."/>
            <person name="Oztas S."/>
            <person name="Ozier-Kalogeropoulos O."/>
            <person name="Pellenz S."/>
            <person name="Potier S."/>
            <person name="Richard G.-F."/>
            <person name="Straub M.-L."/>
            <person name="Suleau A."/>
            <person name="Swennen D."/>
            <person name="Tekaia F."/>
            <person name="Wesolowski-Louvel M."/>
            <person name="Westhof E."/>
            <person name="Wirth B."/>
            <person name="Zeniou-Meyer M."/>
            <person name="Zivanovic Y."/>
            <person name="Bolotin-Fukuhara M."/>
            <person name="Thierry A."/>
            <person name="Bouchier C."/>
            <person name="Caudron B."/>
            <person name="Scarpelli C."/>
            <person name="Gaillardin C."/>
            <person name="Weissenbach J."/>
            <person name="Wincker P."/>
            <person name="Souciet J.-L."/>
        </authorList>
    </citation>
    <scope>NUCLEOTIDE SEQUENCE [LARGE SCALE GENOMIC DNA]</scope>
    <source>
        <strain>CLIB 122 / E 150</strain>
    </source>
</reference>
<reference key="3">
    <citation type="journal article" date="1996" name="Biochem. Mol. Biol. Int.">
        <title>Purification and partial characterization of a fatty acid-binding protein from the yeast, Yarrowia lipolytica.</title>
        <authorList>
            <person name="Dell'Angelica E.C."/>
            <person name="Ermacora M.R."/>
            <person name="Santome J.A."/>
        </authorList>
    </citation>
    <scope>PROTEIN SEQUENCE OF 74-81; 101-105 AND 114-129</scope>
    <scope>FUNCTION</scope>
    <scope>SUBUNIT</scope>
    <source>
        <strain>CX-121-1B</strain>
    </source>
</reference>
<gene>
    <name type="primary">SCP2</name>
    <name type="ordered locus">YALI0E01298g</name>
</gene>
<feature type="initiator methionine" description="Removed" evidence="1">
    <location>
        <position position="1"/>
    </location>
</feature>
<feature type="chain" id="PRO_0000097634" description="Fatty acid-binding protein">
    <location>
        <begin position="2"/>
        <end position="129"/>
    </location>
</feature>
<feature type="domain" description="SCP2">
    <location>
        <begin position="10"/>
        <end position="129"/>
    </location>
</feature>
<feature type="short sequence motif" description="Microbody targeting signal">
    <location>
        <begin position="127"/>
        <end position="129"/>
    </location>
</feature>
<feature type="modified residue" description="N-acetylserine" evidence="1">
    <location>
        <position position="2"/>
    </location>
</feature>
<feature type="sequence conflict" description="In Ref. 3; AA sequence." evidence="3" ref="3">
    <original>D</original>
    <variation>N</variation>
    <location>
        <position position="75"/>
    </location>
</feature>
<feature type="helix" evidence="4">
    <location>
        <begin position="9"/>
        <end position="11"/>
    </location>
</feature>
<feature type="helix" evidence="4">
    <location>
        <begin position="12"/>
        <end position="22"/>
    </location>
</feature>
<feature type="helix" evidence="4">
    <location>
        <begin position="24"/>
        <end position="26"/>
    </location>
</feature>
<feature type="helix" evidence="4">
    <location>
        <begin position="27"/>
        <end position="37"/>
    </location>
</feature>
<feature type="strand" evidence="4">
    <location>
        <begin position="39"/>
        <end position="46"/>
    </location>
</feature>
<feature type="strand" evidence="4">
    <location>
        <begin position="52"/>
        <end position="62"/>
    </location>
</feature>
<feature type="strand" evidence="4">
    <location>
        <begin position="65"/>
        <end position="69"/>
    </location>
</feature>
<feature type="strand" evidence="4">
    <location>
        <begin position="72"/>
        <end position="74"/>
    </location>
</feature>
<feature type="strand" evidence="4">
    <location>
        <begin position="77"/>
        <end position="83"/>
    </location>
</feature>
<feature type="helix" evidence="4">
    <location>
        <begin position="84"/>
        <end position="91"/>
    </location>
</feature>
<feature type="helix" evidence="4">
    <location>
        <begin position="97"/>
        <end position="102"/>
    </location>
</feature>
<feature type="strand" evidence="4">
    <location>
        <begin position="105"/>
        <end position="110"/>
    </location>
</feature>
<feature type="helix" evidence="4">
    <location>
        <begin position="112"/>
        <end position="115"/>
    </location>
</feature>
<feature type="helix" evidence="4">
    <location>
        <begin position="119"/>
        <end position="126"/>
    </location>
</feature>
<dbReference type="EMBL" id="AJ431362">
    <property type="protein sequence ID" value="CAD24067.2"/>
    <property type="molecule type" value="mRNA"/>
</dbReference>
<dbReference type="EMBL" id="CR382131">
    <property type="protein sequence ID" value="CAG78989.1"/>
    <property type="molecule type" value="Genomic_DNA"/>
</dbReference>
<dbReference type="RefSeq" id="XP_503410.1">
    <property type="nucleotide sequence ID" value="XM_503410.1"/>
</dbReference>
<dbReference type="PDB" id="4JGX">
    <property type="method" value="X-ray"/>
    <property type="resolution" value="2.20 A"/>
    <property type="chains" value="A/B=1-129"/>
</dbReference>
<dbReference type="PDB" id="6OVP">
    <property type="method" value="X-ray"/>
    <property type="resolution" value="1.99 A"/>
    <property type="chains" value="A/B=1-129"/>
</dbReference>
<dbReference type="PDBsum" id="4JGX"/>
<dbReference type="PDBsum" id="6OVP"/>
<dbReference type="SMR" id="P80547"/>
<dbReference type="STRING" id="284591.P80547"/>
<dbReference type="iPTMnet" id="P80547"/>
<dbReference type="EnsemblFungi" id="CAG78989">
    <property type="protein sequence ID" value="CAG78989"/>
    <property type="gene ID" value="YALI0_E01298g"/>
</dbReference>
<dbReference type="KEGG" id="yli:2911748"/>
<dbReference type="VEuPathDB" id="FungiDB:YALI0_E01298g"/>
<dbReference type="HOGENOM" id="CLU_105945_0_2_1"/>
<dbReference type="InParanoid" id="P80547"/>
<dbReference type="OMA" id="WTIDMKK"/>
<dbReference type="OrthoDB" id="31858at4891"/>
<dbReference type="EvolutionaryTrace" id="P80547"/>
<dbReference type="Proteomes" id="UP000001300">
    <property type="component" value="Chromosome E"/>
</dbReference>
<dbReference type="GO" id="GO:0005829">
    <property type="term" value="C:cytosol"/>
    <property type="evidence" value="ECO:0000318"/>
    <property type="project" value="GO_Central"/>
</dbReference>
<dbReference type="GO" id="GO:0005777">
    <property type="term" value="C:peroxisome"/>
    <property type="evidence" value="ECO:0007669"/>
    <property type="project" value="UniProtKB-SubCell"/>
</dbReference>
<dbReference type="GO" id="GO:0008289">
    <property type="term" value="F:lipid binding"/>
    <property type="evidence" value="ECO:0007669"/>
    <property type="project" value="UniProtKB-KW"/>
</dbReference>
<dbReference type="FunFam" id="3.30.1050.10:FF:000001">
    <property type="entry name" value="Putative Non-specific lipid-transfer protein"/>
    <property type="match status" value="1"/>
</dbReference>
<dbReference type="Gene3D" id="3.30.1050.10">
    <property type="entry name" value="SCP2 sterol-binding domain"/>
    <property type="match status" value="1"/>
</dbReference>
<dbReference type="InterPro" id="IPR003033">
    <property type="entry name" value="SCP2_sterol-bd_dom"/>
</dbReference>
<dbReference type="InterPro" id="IPR036527">
    <property type="entry name" value="SCP2_sterol-bd_dom_sf"/>
</dbReference>
<dbReference type="PANTHER" id="PTHR10094:SF25">
    <property type="entry name" value="SCP2 STEROL-BINDING DOMAIN-CONTAINING PROTEIN 1"/>
    <property type="match status" value="1"/>
</dbReference>
<dbReference type="PANTHER" id="PTHR10094">
    <property type="entry name" value="STEROL CARRIER PROTEIN 2 SCP-2 FAMILY PROTEIN"/>
    <property type="match status" value="1"/>
</dbReference>
<dbReference type="Pfam" id="PF02036">
    <property type="entry name" value="SCP2"/>
    <property type="match status" value="1"/>
</dbReference>
<dbReference type="SUPFAM" id="SSF55718">
    <property type="entry name" value="SCP-like"/>
    <property type="match status" value="1"/>
</dbReference>